<proteinExistence type="evidence at protein level"/>
<gene>
    <name evidence="1" type="primary">dapE</name>
    <name type="ordered locus">SF2514</name>
    <name type="ordered locus">S2665</name>
</gene>
<dbReference type="EC" id="3.5.1.18" evidence="1"/>
<dbReference type="EMBL" id="AE005674">
    <property type="protein sequence ID" value="AAN44017.1"/>
    <property type="molecule type" value="Genomic_DNA"/>
</dbReference>
<dbReference type="EMBL" id="AE014073">
    <property type="protein sequence ID" value="AAP17832.1"/>
    <property type="molecule type" value="Genomic_DNA"/>
</dbReference>
<dbReference type="RefSeq" id="NP_708310.1">
    <property type="nucleotide sequence ID" value="NC_004337.2"/>
</dbReference>
<dbReference type="RefSeq" id="WP_001277801.1">
    <property type="nucleotide sequence ID" value="NZ_WPGW01000011.1"/>
</dbReference>
<dbReference type="PDB" id="7LGP">
    <property type="method" value="X-ray"/>
    <property type="resolution" value="1.91 A"/>
    <property type="chains" value="A/B=1-375"/>
</dbReference>
<dbReference type="PDBsum" id="7LGP"/>
<dbReference type="SMR" id="P0AED8"/>
<dbReference type="STRING" id="198214.SF2514"/>
<dbReference type="MEROPS" id="M20.010"/>
<dbReference type="PaxDb" id="198214-SF2514"/>
<dbReference type="GeneID" id="1025615"/>
<dbReference type="KEGG" id="sfl:SF2514"/>
<dbReference type="KEGG" id="sfx:S2665"/>
<dbReference type="PATRIC" id="fig|198214.7.peg.3006"/>
<dbReference type="HOGENOM" id="CLU_021802_4_0_6"/>
<dbReference type="UniPathway" id="UPA00034">
    <property type="reaction ID" value="UER00021"/>
</dbReference>
<dbReference type="Proteomes" id="UP000001006">
    <property type="component" value="Chromosome"/>
</dbReference>
<dbReference type="Proteomes" id="UP000002673">
    <property type="component" value="Chromosome"/>
</dbReference>
<dbReference type="GO" id="GO:0008777">
    <property type="term" value="F:acetylornithine deacetylase activity"/>
    <property type="evidence" value="ECO:0007669"/>
    <property type="project" value="TreeGrafter"/>
</dbReference>
<dbReference type="GO" id="GO:0050897">
    <property type="term" value="F:cobalt ion binding"/>
    <property type="evidence" value="ECO:0007669"/>
    <property type="project" value="UniProtKB-UniRule"/>
</dbReference>
<dbReference type="GO" id="GO:0009014">
    <property type="term" value="F:succinyl-diaminopimelate desuccinylase activity"/>
    <property type="evidence" value="ECO:0007669"/>
    <property type="project" value="UniProtKB-UniRule"/>
</dbReference>
<dbReference type="GO" id="GO:0008270">
    <property type="term" value="F:zinc ion binding"/>
    <property type="evidence" value="ECO:0007669"/>
    <property type="project" value="UniProtKB-UniRule"/>
</dbReference>
<dbReference type="GO" id="GO:0019877">
    <property type="term" value="P:diaminopimelate biosynthetic process"/>
    <property type="evidence" value="ECO:0007669"/>
    <property type="project" value="UniProtKB-UniRule"/>
</dbReference>
<dbReference type="GO" id="GO:0006526">
    <property type="term" value="P:L-arginine biosynthetic process"/>
    <property type="evidence" value="ECO:0007669"/>
    <property type="project" value="TreeGrafter"/>
</dbReference>
<dbReference type="GO" id="GO:0009089">
    <property type="term" value="P:lysine biosynthetic process via diaminopimelate"/>
    <property type="evidence" value="ECO:0007669"/>
    <property type="project" value="UniProtKB-UniRule"/>
</dbReference>
<dbReference type="CDD" id="cd03891">
    <property type="entry name" value="M20_DapE_proteobac"/>
    <property type="match status" value="1"/>
</dbReference>
<dbReference type="FunFam" id="3.30.70.360:FF:000011">
    <property type="entry name" value="Succinyl-diaminopimelate desuccinylase"/>
    <property type="match status" value="1"/>
</dbReference>
<dbReference type="FunFam" id="3.40.630.10:FF:000005">
    <property type="entry name" value="Succinyl-diaminopimelate desuccinylase"/>
    <property type="match status" value="1"/>
</dbReference>
<dbReference type="FunFam" id="3.40.630.10:FF:000010">
    <property type="entry name" value="Succinyl-diaminopimelate desuccinylase"/>
    <property type="match status" value="1"/>
</dbReference>
<dbReference type="Gene3D" id="3.40.630.10">
    <property type="entry name" value="Zn peptidases"/>
    <property type="match status" value="2"/>
</dbReference>
<dbReference type="HAMAP" id="MF_01690">
    <property type="entry name" value="DapE"/>
    <property type="match status" value="1"/>
</dbReference>
<dbReference type="InterPro" id="IPR001261">
    <property type="entry name" value="ArgE/DapE_CS"/>
</dbReference>
<dbReference type="InterPro" id="IPR036264">
    <property type="entry name" value="Bact_exopeptidase_dim_dom"/>
</dbReference>
<dbReference type="InterPro" id="IPR005941">
    <property type="entry name" value="DapE_proteobac"/>
</dbReference>
<dbReference type="InterPro" id="IPR002933">
    <property type="entry name" value="Peptidase_M20"/>
</dbReference>
<dbReference type="InterPro" id="IPR011650">
    <property type="entry name" value="Peptidase_M20_dimer"/>
</dbReference>
<dbReference type="InterPro" id="IPR050072">
    <property type="entry name" value="Peptidase_M20A"/>
</dbReference>
<dbReference type="NCBIfam" id="TIGR01246">
    <property type="entry name" value="dapE_proteo"/>
    <property type="match status" value="1"/>
</dbReference>
<dbReference type="NCBIfam" id="NF009557">
    <property type="entry name" value="PRK13009.1"/>
    <property type="match status" value="1"/>
</dbReference>
<dbReference type="PANTHER" id="PTHR43808">
    <property type="entry name" value="ACETYLORNITHINE DEACETYLASE"/>
    <property type="match status" value="1"/>
</dbReference>
<dbReference type="PANTHER" id="PTHR43808:SF31">
    <property type="entry name" value="N-ACETYL-L-CITRULLINE DEACETYLASE"/>
    <property type="match status" value="1"/>
</dbReference>
<dbReference type="Pfam" id="PF07687">
    <property type="entry name" value="M20_dimer"/>
    <property type="match status" value="1"/>
</dbReference>
<dbReference type="Pfam" id="PF01546">
    <property type="entry name" value="Peptidase_M20"/>
    <property type="match status" value="1"/>
</dbReference>
<dbReference type="SUPFAM" id="SSF55031">
    <property type="entry name" value="Bacterial exopeptidase dimerisation domain"/>
    <property type="match status" value="1"/>
</dbReference>
<dbReference type="SUPFAM" id="SSF53187">
    <property type="entry name" value="Zn-dependent exopeptidases"/>
    <property type="match status" value="1"/>
</dbReference>
<dbReference type="PROSITE" id="PS00758">
    <property type="entry name" value="ARGE_DAPE_CPG2_1"/>
    <property type="match status" value="1"/>
</dbReference>
<dbReference type="PROSITE" id="PS00759">
    <property type="entry name" value="ARGE_DAPE_CPG2_2"/>
    <property type="match status" value="1"/>
</dbReference>
<evidence type="ECO:0000255" key="1">
    <source>
        <dbReference type="HAMAP-Rule" id="MF_01690"/>
    </source>
</evidence>
<evidence type="ECO:0007829" key="2">
    <source>
        <dbReference type="PDB" id="7LGP"/>
    </source>
</evidence>
<feature type="chain" id="PRO_0000185263" description="Succinyl-diaminopimelate desuccinylase">
    <location>
        <begin position="1"/>
        <end position="375"/>
    </location>
</feature>
<feature type="active site" evidence="1">
    <location>
        <position position="68"/>
    </location>
</feature>
<feature type="active site" description="Proton acceptor" evidence="1">
    <location>
        <position position="133"/>
    </location>
</feature>
<feature type="binding site" evidence="1">
    <location>
        <position position="66"/>
    </location>
    <ligand>
        <name>Zn(2+)</name>
        <dbReference type="ChEBI" id="CHEBI:29105"/>
        <label>1</label>
    </ligand>
</feature>
<feature type="binding site" evidence="1">
    <location>
        <position position="99"/>
    </location>
    <ligand>
        <name>Zn(2+)</name>
        <dbReference type="ChEBI" id="CHEBI:29105"/>
        <label>1</label>
    </ligand>
</feature>
<feature type="binding site" evidence="1">
    <location>
        <position position="99"/>
    </location>
    <ligand>
        <name>Zn(2+)</name>
        <dbReference type="ChEBI" id="CHEBI:29105"/>
        <label>2</label>
    </ligand>
</feature>
<feature type="binding site" evidence="1">
    <location>
        <position position="134"/>
    </location>
    <ligand>
        <name>Zn(2+)</name>
        <dbReference type="ChEBI" id="CHEBI:29105"/>
        <label>2</label>
    </ligand>
</feature>
<feature type="binding site" evidence="1">
    <location>
        <position position="162"/>
    </location>
    <ligand>
        <name>Zn(2+)</name>
        <dbReference type="ChEBI" id="CHEBI:29105"/>
        <label>1</label>
    </ligand>
</feature>
<feature type="binding site" evidence="1">
    <location>
        <position position="348"/>
    </location>
    <ligand>
        <name>Zn(2+)</name>
        <dbReference type="ChEBI" id="CHEBI:29105"/>
        <label>2</label>
    </ligand>
</feature>
<feature type="helix" evidence="2">
    <location>
        <begin position="4"/>
        <end position="14"/>
    </location>
</feature>
<feature type="helix" evidence="2">
    <location>
        <begin position="25"/>
        <end position="34"/>
    </location>
</feature>
<feature type="turn" evidence="2">
    <location>
        <begin position="35"/>
        <end position="37"/>
    </location>
</feature>
<feature type="strand" evidence="2">
    <location>
        <begin position="39"/>
        <end position="42"/>
    </location>
</feature>
<feature type="strand" evidence="2">
    <location>
        <begin position="50"/>
        <end position="66"/>
    </location>
</feature>
<feature type="helix" evidence="2">
    <location>
        <begin position="75"/>
        <end position="77"/>
    </location>
</feature>
<feature type="strand" evidence="2">
    <location>
        <begin position="78"/>
        <end position="80"/>
    </location>
</feature>
<feature type="strand" evidence="2">
    <location>
        <begin position="86"/>
        <end position="88"/>
    </location>
</feature>
<feature type="strand" evidence="2">
    <location>
        <begin position="91"/>
        <end position="94"/>
    </location>
</feature>
<feature type="turn" evidence="2">
    <location>
        <begin position="95"/>
        <end position="100"/>
    </location>
</feature>
<feature type="helix" evidence="2">
    <location>
        <begin position="101"/>
        <end position="117"/>
    </location>
</feature>
<feature type="strand" evidence="2">
    <location>
        <begin position="122"/>
        <end position="131"/>
    </location>
</feature>
<feature type="strand" evidence="2">
    <location>
        <begin position="133"/>
        <end position="135"/>
    </location>
</feature>
<feature type="strand" evidence="2">
    <location>
        <begin position="138"/>
        <end position="140"/>
    </location>
</feature>
<feature type="helix" evidence="2">
    <location>
        <begin position="141"/>
        <end position="150"/>
    </location>
</feature>
<feature type="strand" evidence="2">
    <location>
        <begin position="157"/>
        <end position="160"/>
    </location>
</feature>
<feature type="strand" evidence="2">
    <location>
        <begin position="165"/>
        <end position="168"/>
    </location>
</feature>
<feature type="strand" evidence="2">
    <location>
        <begin position="171"/>
        <end position="174"/>
    </location>
</feature>
<feature type="strand" evidence="2">
    <location>
        <begin position="179"/>
        <end position="188"/>
    </location>
</feature>
<feature type="helix" evidence="2">
    <location>
        <begin position="197"/>
        <end position="199"/>
    </location>
</feature>
<feature type="helix" evidence="2">
    <location>
        <begin position="203"/>
        <end position="216"/>
    </location>
</feature>
<feature type="strand" evidence="2">
    <location>
        <begin position="230"/>
        <end position="238"/>
    </location>
</feature>
<feature type="strand" evidence="2">
    <location>
        <begin position="248"/>
        <end position="258"/>
    </location>
</feature>
<feature type="helix" evidence="2">
    <location>
        <begin position="264"/>
        <end position="277"/>
    </location>
</feature>
<feature type="strand" evidence="2">
    <location>
        <begin position="282"/>
        <end position="290"/>
    </location>
</feature>
<feature type="helix" evidence="2">
    <location>
        <begin position="299"/>
        <end position="312"/>
    </location>
</feature>
<feature type="strand" evidence="2">
    <location>
        <begin position="317"/>
        <end position="319"/>
    </location>
</feature>
<feature type="helix" evidence="2">
    <location>
        <begin position="327"/>
        <end position="330"/>
    </location>
</feature>
<feature type="helix" evidence="2">
    <location>
        <begin position="331"/>
        <end position="333"/>
    </location>
</feature>
<feature type="strand" evidence="2">
    <location>
        <begin position="336"/>
        <end position="339"/>
    </location>
</feature>
<feature type="turn" evidence="2">
    <location>
        <begin position="345"/>
        <end position="348"/>
    </location>
</feature>
<feature type="strand" evidence="2">
    <location>
        <begin position="353"/>
        <end position="355"/>
    </location>
</feature>
<feature type="helix" evidence="2">
    <location>
        <begin position="356"/>
        <end position="374"/>
    </location>
</feature>
<sequence>MSCPVIELTQQLIRRPSLSPDDAGCQALLIERLQAIGFTVERMDFADTQNFWAWRGQGETLAFAGHTDVVPPGDADRWINPPFEPTIRDGMLFGRGAADMKGSLAAMVVAAERFVAQHPNHTGRLAFLITSDEEASAHNGTVKVVEALMARNERLDYCLVGEPSSIEVVGDVVKNGRRGSLTCNLTIHGVQGHVAYPHLADNPVHRAAPFLNELVAIEWDQGNEFFPATSMQIANIQAGTGSNNVIPGELFVQFNFRFSTELTDEMIKAQVLALLEKHQLRYTVDWWLSGQPFLTARGKLVDAVVNAVEHYNEIKPQLLTTGGTSDGRFIARMGAQVVELGPVNATIHKINECVNAADLQLLARMYQRIMEQLVA</sequence>
<organism>
    <name type="scientific">Shigella flexneri</name>
    <dbReference type="NCBI Taxonomy" id="623"/>
    <lineage>
        <taxon>Bacteria</taxon>
        <taxon>Pseudomonadati</taxon>
        <taxon>Pseudomonadota</taxon>
        <taxon>Gammaproteobacteria</taxon>
        <taxon>Enterobacterales</taxon>
        <taxon>Enterobacteriaceae</taxon>
        <taxon>Shigella</taxon>
    </lineage>
</organism>
<reference key="1">
    <citation type="journal article" date="2002" name="Nucleic Acids Res.">
        <title>Genome sequence of Shigella flexneri 2a: insights into pathogenicity through comparison with genomes of Escherichia coli K12 and O157.</title>
        <authorList>
            <person name="Jin Q."/>
            <person name="Yuan Z."/>
            <person name="Xu J."/>
            <person name="Wang Y."/>
            <person name="Shen Y."/>
            <person name="Lu W."/>
            <person name="Wang J."/>
            <person name="Liu H."/>
            <person name="Yang J."/>
            <person name="Yang F."/>
            <person name="Zhang X."/>
            <person name="Zhang J."/>
            <person name="Yang G."/>
            <person name="Wu H."/>
            <person name="Qu D."/>
            <person name="Dong J."/>
            <person name="Sun L."/>
            <person name="Xue Y."/>
            <person name="Zhao A."/>
            <person name="Gao Y."/>
            <person name="Zhu J."/>
            <person name="Kan B."/>
            <person name="Ding K."/>
            <person name="Chen S."/>
            <person name="Cheng H."/>
            <person name="Yao Z."/>
            <person name="He B."/>
            <person name="Chen R."/>
            <person name="Ma D."/>
            <person name="Qiang B."/>
            <person name="Wen Y."/>
            <person name="Hou Y."/>
            <person name="Yu J."/>
        </authorList>
    </citation>
    <scope>NUCLEOTIDE SEQUENCE [LARGE SCALE GENOMIC DNA]</scope>
    <source>
        <strain>301 / Serotype 2a</strain>
    </source>
</reference>
<reference key="2">
    <citation type="journal article" date="2003" name="Infect. Immun.">
        <title>Complete genome sequence and comparative genomics of Shigella flexneri serotype 2a strain 2457T.</title>
        <authorList>
            <person name="Wei J."/>
            <person name="Goldberg M.B."/>
            <person name="Burland V."/>
            <person name="Venkatesan M.M."/>
            <person name="Deng W."/>
            <person name="Fournier G."/>
            <person name="Mayhew G.F."/>
            <person name="Plunkett G. III"/>
            <person name="Rose D.J."/>
            <person name="Darling A."/>
            <person name="Mau B."/>
            <person name="Perna N.T."/>
            <person name="Payne S.M."/>
            <person name="Runyen-Janecky L.J."/>
            <person name="Zhou S."/>
            <person name="Schwartz D.C."/>
            <person name="Blattner F.R."/>
        </authorList>
    </citation>
    <scope>NUCLEOTIDE SEQUENCE [LARGE SCALE GENOMIC DNA]</scope>
    <source>
        <strain>ATCC 700930 / 2457T / Serotype 2a</strain>
    </source>
</reference>
<accession>P0AED8</accession>
<accession>P24176</accession>
<protein>
    <recommendedName>
        <fullName evidence="1">Succinyl-diaminopimelate desuccinylase</fullName>
        <shortName evidence="1">SDAP desuccinylase</shortName>
        <ecNumber evidence="1">3.5.1.18</ecNumber>
    </recommendedName>
    <alternativeName>
        <fullName evidence="1">N-succinyl-LL-2,6-diaminoheptanedioate amidohydrolase</fullName>
    </alternativeName>
</protein>
<name>DAPE_SHIFL</name>
<keyword id="KW-0002">3D-structure</keyword>
<keyword id="KW-0028">Amino-acid biosynthesis</keyword>
<keyword id="KW-0170">Cobalt</keyword>
<keyword id="KW-0220">Diaminopimelate biosynthesis</keyword>
<keyword id="KW-0378">Hydrolase</keyword>
<keyword id="KW-0457">Lysine biosynthesis</keyword>
<keyword id="KW-0479">Metal-binding</keyword>
<keyword id="KW-1185">Reference proteome</keyword>
<keyword id="KW-0862">Zinc</keyword>
<comment type="function">
    <text evidence="1">Catalyzes the hydrolysis of N-succinyl-L,L-diaminopimelic acid (SDAP), forming succinate and LL-2,6-diaminopimelate (DAP), an intermediate involved in the bacterial biosynthesis of lysine and meso-diaminopimelic acid, an essential component of bacterial cell walls.</text>
</comment>
<comment type="catalytic activity">
    <reaction evidence="1">
        <text>N-succinyl-(2S,6S)-2,6-diaminopimelate + H2O = (2S,6S)-2,6-diaminopimelate + succinate</text>
        <dbReference type="Rhea" id="RHEA:22608"/>
        <dbReference type="ChEBI" id="CHEBI:15377"/>
        <dbReference type="ChEBI" id="CHEBI:30031"/>
        <dbReference type="ChEBI" id="CHEBI:57609"/>
        <dbReference type="ChEBI" id="CHEBI:58087"/>
        <dbReference type="EC" id="3.5.1.18"/>
    </reaction>
</comment>
<comment type="cofactor">
    <cofactor evidence="1">
        <name>Zn(2+)</name>
        <dbReference type="ChEBI" id="CHEBI:29105"/>
    </cofactor>
    <cofactor evidence="1">
        <name>Co(2+)</name>
        <dbReference type="ChEBI" id="CHEBI:48828"/>
    </cofactor>
    <text evidence="1">Binds 2 Zn(2+) or Co(2+) ions per subunit.</text>
</comment>
<comment type="pathway">
    <text evidence="1">Amino-acid biosynthesis; L-lysine biosynthesis via DAP pathway; LL-2,6-diaminopimelate from (S)-tetrahydrodipicolinate (succinylase route): step 3/3.</text>
</comment>
<comment type="subunit">
    <text evidence="1">Homodimer.</text>
</comment>
<comment type="similarity">
    <text evidence="1">Belongs to the peptidase M20A family. DapE subfamily.</text>
</comment>